<proteinExistence type="evidence at protein level"/>
<sequence>MSYYNRYRNKRRSDNGGGNLSNSNNNNGGMPSGLSASDAIFDLGKNKRVTVRQFRNINLIDIREYYLDSSTGEMKPGKKGISLTEDLYDELLKHRLNIDEALRRLGSKRPKTKMVRLLSDDEYEDDNNNDSTNNDKDKNGKDKNSPKKRREDKSKASNESHDLEPRSKKKKPAPPTLLPHEENIQNAEREANATLIIPGQAGRKQQEERKQKEKEEAEEAKAKAVAEQEKEAKAKEKIAEPEPEPVPTLQAKKEDIVSNINESKDANSSDEEFAQSLEAEMNKAEDDISEEE</sequence>
<name>SUB1_YEAST</name>
<keyword id="KW-0238">DNA-binding</keyword>
<keyword id="KW-0539">Nucleus</keyword>
<keyword id="KW-0597">Phosphoprotein</keyword>
<keyword id="KW-1185">Reference proteome</keyword>
<keyword id="KW-0804">Transcription</keyword>
<keyword id="KW-0805">Transcription regulation</keyword>
<protein>
    <recommendedName>
        <fullName>RNA polymerase II transcriptional coactivator SUB1</fullName>
    </recommendedName>
</protein>
<gene>
    <name type="primary">SUB1</name>
    <name type="synonym">TSP1</name>
    <name type="ordered locus">YMR039C</name>
    <name type="ORF">YM9532.04C</name>
</gene>
<feature type="chain" id="PRO_0000215951" description="RNA polymerase II transcriptional coactivator SUB1">
    <location>
        <begin position="1"/>
        <end position="292"/>
    </location>
</feature>
<feature type="region of interest" description="Disordered" evidence="1">
    <location>
        <begin position="1"/>
        <end position="31"/>
    </location>
</feature>
<feature type="region of interest" description="Disordered" evidence="1">
    <location>
        <begin position="117"/>
        <end position="292"/>
    </location>
</feature>
<feature type="compositionally biased region" description="Low complexity" evidence="1">
    <location>
        <begin position="20"/>
        <end position="31"/>
    </location>
</feature>
<feature type="compositionally biased region" description="Basic and acidic residues" evidence="1">
    <location>
        <begin position="133"/>
        <end position="166"/>
    </location>
</feature>
<feature type="compositionally biased region" description="Basic and acidic residues" evidence="1">
    <location>
        <begin position="179"/>
        <end position="191"/>
    </location>
</feature>
<feature type="compositionally biased region" description="Basic and acidic residues" evidence="1">
    <location>
        <begin position="204"/>
        <end position="240"/>
    </location>
</feature>
<feature type="compositionally biased region" description="Basic and acidic residues" evidence="1">
    <location>
        <begin position="251"/>
        <end position="267"/>
    </location>
</feature>
<feature type="modified residue" description="Phosphoserine" evidence="4 5 6">
    <location>
        <position position="119"/>
    </location>
</feature>
<feature type="modified residue" description="Phosphoserine" evidence="4 6">
    <location>
        <position position="268"/>
    </location>
</feature>
<feature type="modified residue" description="Phosphoserine" evidence="4 6">
    <location>
        <position position="269"/>
    </location>
</feature>
<feature type="modified residue" description="Phosphoserine" evidence="5 6">
    <location>
        <position position="289"/>
    </location>
</feature>
<accession>P54000</accession>
<accession>D6VZL4</accession>
<comment type="function">
    <text>Plays a role in the release of TFIIB from the transcription complex during transcription initiation. Binds to TFIIB and specifically inhibits the formation of the TBP-TFIIB-promoter complexes.</text>
</comment>
<comment type="interaction">
    <interactant intactId="EBI-18492">
        <id>P54000</id>
    </interactant>
    <interactant intactId="EBI-15640">
        <id>P25299</id>
        <label>RNA15</label>
    </interactant>
    <organismsDiffer>false</organismsDiffer>
    <experiments>2</experiments>
</comment>
<comment type="subcellular location">
    <subcellularLocation>
        <location evidence="3">Nucleus</location>
    </subcellularLocation>
</comment>
<comment type="miscellaneous">
    <text evidence="2">Present with 7820 molecules/cell in log phase SD medium.</text>
</comment>
<comment type="similarity">
    <text evidence="3">Belongs to the transcriptional coactivator PC4 family.</text>
</comment>
<evidence type="ECO:0000256" key="1">
    <source>
        <dbReference type="SAM" id="MobiDB-lite"/>
    </source>
</evidence>
<evidence type="ECO:0000269" key="2">
    <source>
    </source>
</evidence>
<evidence type="ECO:0000305" key="3"/>
<evidence type="ECO:0007744" key="4">
    <source>
    </source>
</evidence>
<evidence type="ECO:0007744" key="5">
    <source>
    </source>
</evidence>
<evidence type="ECO:0007744" key="6">
    <source>
    </source>
</evidence>
<dbReference type="EMBL" id="Z48502">
    <property type="protein sequence ID" value="CAA88405.1"/>
    <property type="molecule type" value="Genomic_DNA"/>
</dbReference>
<dbReference type="EMBL" id="BK006946">
    <property type="protein sequence ID" value="DAA09938.1"/>
    <property type="molecule type" value="Genomic_DNA"/>
</dbReference>
<dbReference type="PIR" id="S52888">
    <property type="entry name" value="S52888"/>
</dbReference>
<dbReference type="RefSeq" id="NP_013753.1">
    <property type="nucleotide sequence ID" value="NM_001182536.1"/>
</dbReference>
<dbReference type="SMR" id="P54000"/>
<dbReference type="BioGRID" id="35211">
    <property type="interactions" value="471"/>
</dbReference>
<dbReference type="DIP" id="DIP-4696N"/>
<dbReference type="FunCoup" id="P54000">
    <property type="interactions" value="115"/>
</dbReference>
<dbReference type="IntAct" id="P54000">
    <property type="interactions" value="6"/>
</dbReference>
<dbReference type="MINT" id="P54000"/>
<dbReference type="STRING" id="4932.YMR039C"/>
<dbReference type="iPTMnet" id="P54000"/>
<dbReference type="PaxDb" id="4932-YMR039C"/>
<dbReference type="PeptideAtlas" id="P54000"/>
<dbReference type="EnsemblFungi" id="YMR039C_mRNA">
    <property type="protein sequence ID" value="YMR039C"/>
    <property type="gene ID" value="YMR039C"/>
</dbReference>
<dbReference type="GeneID" id="855055"/>
<dbReference type="KEGG" id="sce:YMR039C"/>
<dbReference type="AGR" id="SGD:S000004642"/>
<dbReference type="SGD" id="S000004642">
    <property type="gene designation" value="SUB1"/>
</dbReference>
<dbReference type="VEuPathDB" id="FungiDB:YMR039C"/>
<dbReference type="eggNOG" id="KOG2712">
    <property type="taxonomic scope" value="Eukaryota"/>
</dbReference>
<dbReference type="GeneTree" id="ENSGT00390000008802"/>
<dbReference type="HOGENOM" id="CLU_065855_0_0_1"/>
<dbReference type="InParanoid" id="P54000"/>
<dbReference type="OMA" id="MNRADDD"/>
<dbReference type="OrthoDB" id="2505440at2759"/>
<dbReference type="BioCyc" id="YEAST:G3O-32744-MONOMER"/>
<dbReference type="BioGRID-ORCS" id="855055">
    <property type="hits" value="0 hits in 10 CRISPR screens"/>
</dbReference>
<dbReference type="PRO" id="PR:P54000"/>
<dbReference type="Proteomes" id="UP000002311">
    <property type="component" value="Chromosome XIII"/>
</dbReference>
<dbReference type="RNAct" id="P54000">
    <property type="molecule type" value="protein"/>
</dbReference>
<dbReference type="GO" id="GO:0005730">
    <property type="term" value="C:nucleolus"/>
    <property type="evidence" value="ECO:0000314"/>
    <property type="project" value="CACAO"/>
</dbReference>
<dbReference type="GO" id="GO:0005654">
    <property type="term" value="C:nucleoplasm"/>
    <property type="evidence" value="ECO:0000314"/>
    <property type="project" value="CACAO"/>
</dbReference>
<dbReference type="GO" id="GO:0005634">
    <property type="term" value="C:nucleus"/>
    <property type="evidence" value="ECO:0000314"/>
    <property type="project" value="SGD"/>
</dbReference>
<dbReference type="GO" id="GO:0005667">
    <property type="term" value="C:transcription regulator complex"/>
    <property type="evidence" value="ECO:0000318"/>
    <property type="project" value="GO_Central"/>
</dbReference>
<dbReference type="GO" id="GO:0003682">
    <property type="term" value="F:chromatin binding"/>
    <property type="evidence" value="ECO:0000314"/>
    <property type="project" value="SGD"/>
</dbReference>
<dbReference type="GO" id="GO:0051880">
    <property type="term" value="F:G-quadruplex DNA binding"/>
    <property type="evidence" value="ECO:0000314"/>
    <property type="project" value="SGD"/>
</dbReference>
<dbReference type="GO" id="GO:0003713">
    <property type="term" value="F:transcription coactivator activity"/>
    <property type="evidence" value="ECO:0000250"/>
    <property type="project" value="SGD"/>
</dbReference>
<dbReference type="GO" id="GO:0071444">
    <property type="term" value="P:cellular response to pheromone"/>
    <property type="evidence" value="ECO:0000315"/>
    <property type="project" value="SGD"/>
</dbReference>
<dbReference type="GO" id="GO:0033554">
    <property type="term" value="P:cellular response to stress"/>
    <property type="evidence" value="ECO:0000314"/>
    <property type="project" value="SGD"/>
</dbReference>
<dbReference type="GO" id="GO:0006303">
    <property type="term" value="P:double-strand break repair via nonhomologous end joining"/>
    <property type="evidence" value="ECO:0000315"/>
    <property type="project" value="SGD"/>
</dbReference>
<dbReference type="GO" id="GO:0006972">
    <property type="term" value="P:hyperosmotic response"/>
    <property type="evidence" value="ECO:0000316"/>
    <property type="project" value="SGD"/>
</dbReference>
<dbReference type="GO" id="GO:0075297">
    <property type="term" value="P:negative regulation of ascospore formation"/>
    <property type="evidence" value="ECO:0000315"/>
    <property type="project" value="SGD"/>
</dbReference>
<dbReference type="GO" id="GO:0051053">
    <property type="term" value="P:negative regulation of DNA metabolic process"/>
    <property type="evidence" value="ECO:0000315"/>
    <property type="project" value="CACAO"/>
</dbReference>
<dbReference type="GO" id="GO:0045944">
    <property type="term" value="P:positive regulation of transcription by RNA polymerase II"/>
    <property type="evidence" value="ECO:0000315"/>
    <property type="project" value="SGD"/>
</dbReference>
<dbReference type="GO" id="GO:0045945">
    <property type="term" value="P:positive regulation of transcription by RNA polymerase III"/>
    <property type="evidence" value="ECO:0000314"/>
    <property type="project" value="SGD"/>
</dbReference>
<dbReference type="GO" id="GO:0032968">
    <property type="term" value="P:positive regulation of transcription elongation by RNA polymerase II"/>
    <property type="evidence" value="ECO:0000315"/>
    <property type="project" value="SGD"/>
</dbReference>
<dbReference type="GO" id="GO:0060261">
    <property type="term" value="P:positive regulation of transcription initiation by RNA polymerase II"/>
    <property type="evidence" value="ECO:0007669"/>
    <property type="project" value="InterPro"/>
</dbReference>
<dbReference type="GO" id="GO:0006357">
    <property type="term" value="P:regulation of transcription by RNA polymerase II"/>
    <property type="evidence" value="ECO:0000314"/>
    <property type="project" value="SGD"/>
</dbReference>
<dbReference type="GO" id="GO:0070898">
    <property type="term" value="P:RNA polymerase III preinitiation complex assembly"/>
    <property type="evidence" value="ECO:0000314"/>
    <property type="project" value="SGD"/>
</dbReference>
<dbReference type="GO" id="GO:0006369">
    <property type="term" value="P:termination of RNA polymerase II transcription"/>
    <property type="evidence" value="ECO:0000316"/>
    <property type="project" value="SGD"/>
</dbReference>
<dbReference type="FunFam" id="2.30.31.10:FF:000003">
    <property type="entry name" value="SUB1p Transcriptional coactivator"/>
    <property type="match status" value="1"/>
</dbReference>
<dbReference type="Gene3D" id="2.30.31.10">
    <property type="entry name" value="Transcriptional Coactivator Pc4, Chain A"/>
    <property type="match status" value="1"/>
</dbReference>
<dbReference type="InterPro" id="IPR003173">
    <property type="entry name" value="PC4_C"/>
</dbReference>
<dbReference type="InterPro" id="IPR009044">
    <property type="entry name" value="ssDNA-bd_transcriptional_reg"/>
</dbReference>
<dbReference type="InterPro" id="IPR045125">
    <property type="entry name" value="Sub1/Tcp4-like"/>
</dbReference>
<dbReference type="PANTHER" id="PTHR13215">
    <property type="entry name" value="RNA POLYMERASE II TRANSCRIPTIONAL COACTIVATOR"/>
    <property type="match status" value="1"/>
</dbReference>
<dbReference type="Pfam" id="PF02229">
    <property type="entry name" value="PC4"/>
    <property type="match status" value="1"/>
</dbReference>
<dbReference type="SUPFAM" id="SSF54447">
    <property type="entry name" value="ssDNA-binding transcriptional regulator domain"/>
    <property type="match status" value="1"/>
</dbReference>
<organism>
    <name type="scientific">Saccharomyces cerevisiae (strain ATCC 204508 / S288c)</name>
    <name type="common">Baker's yeast</name>
    <dbReference type="NCBI Taxonomy" id="559292"/>
    <lineage>
        <taxon>Eukaryota</taxon>
        <taxon>Fungi</taxon>
        <taxon>Dikarya</taxon>
        <taxon>Ascomycota</taxon>
        <taxon>Saccharomycotina</taxon>
        <taxon>Saccharomycetes</taxon>
        <taxon>Saccharomycetales</taxon>
        <taxon>Saccharomycetaceae</taxon>
        <taxon>Saccharomyces</taxon>
    </lineage>
</organism>
<reference key="1">
    <citation type="journal article" date="1996" name="EMBO J.">
        <title>Yeast SUB1 is a suppressor of TFIIB mutations and has homology to the human co-activator PC4.</title>
        <authorList>
            <person name="Knaus R."/>
            <person name="Pollock R."/>
            <person name="Guarente L."/>
        </authorList>
    </citation>
    <scope>NUCLEOTIDE SEQUENCE [GENOMIC DNA]</scope>
</reference>
<reference key="2">
    <citation type="journal article" date="1997" name="Nature">
        <title>The nucleotide sequence of Saccharomyces cerevisiae chromosome XIII.</title>
        <authorList>
            <person name="Bowman S."/>
            <person name="Churcher C.M."/>
            <person name="Badcock K."/>
            <person name="Brown D."/>
            <person name="Chillingworth T."/>
            <person name="Connor R."/>
            <person name="Dedman K."/>
            <person name="Devlin K."/>
            <person name="Gentles S."/>
            <person name="Hamlin N."/>
            <person name="Hunt S."/>
            <person name="Jagels K."/>
            <person name="Lye G."/>
            <person name="Moule S."/>
            <person name="Odell C."/>
            <person name="Pearson D."/>
            <person name="Rajandream M.A."/>
            <person name="Rice P."/>
            <person name="Skelton J."/>
            <person name="Walsh S.V."/>
            <person name="Whitehead S."/>
            <person name="Barrell B.G."/>
        </authorList>
    </citation>
    <scope>NUCLEOTIDE SEQUENCE [LARGE SCALE GENOMIC DNA]</scope>
    <source>
        <strain>ATCC 204508 / S288c</strain>
    </source>
</reference>
<reference key="3">
    <citation type="journal article" date="2014" name="G3 (Bethesda)">
        <title>The reference genome sequence of Saccharomyces cerevisiae: Then and now.</title>
        <authorList>
            <person name="Engel S.R."/>
            <person name="Dietrich F.S."/>
            <person name="Fisk D.G."/>
            <person name="Binkley G."/>
            <person name="Balakrishnan R."/>
            <person name="Costanzo M.C."/>
            <person name="Dwight S.S."/>
            <person name="Hitz B.C."/>
            <person name="Karra K."/>
            <person name="Nash R.S."/>
            <person name="Weng S."/>
            <person name="Wong E.D."/>
            <person name="Lloyd P."/>
            <person name="Skrzypek M.S."/>
            <person name="Miyasato S.R."/>
            <person name="Simison M."/>
            <person name="Cherry J.M."/>
        </authorList>
    </citation>
    <scope>GENOME REANNOTATION</scope>
    <source>
        <strain>ATCC 204508 / S288c</strain>
    </source>
</reference>
<reference key="4">
    <citation type="journal article" date="2003" name="Nature">
        <title>Global analysis of protein expression in yeast.</title>
        <authorList>
            <person name="Ghaemmaghami S."/>
            <person name="Huh W.-K."/>
            <person name="Bower K."/>
            <person name="Howson R.W."/>
            <person name="Belle A."/>
            <person name="Dephoure N."/>
            <person name="O'Shea E.K."/>
            <person name="Weissman J.S."/>
        </authorList>
    </citation>
    <scope>LEVEL OF PROTEIN EXPRESSION [LARGE SCALE ANALYSIS]</scope>
</reference>
<reference key="5">
    <citation type="journal article" date="2007" name="J. Proteome Res.">
        <title>Large-scale phosphorylation analysis of alpha-factor-arrested Saccharomyces cerevisiae.</title>
        <authorList>
            <person name="Li X."/>
            <person name="Gerber S.A."/>
            <person name="Rudner A.D."/>
            <person name="Beausoleil S.A."/>
            <person name="Haas W."/>
            <person name="Villen J."/>
            <person name="Elias J.E."/>
            <person name="Gygi S.P."/>
        </authorList>
    </citation>
    <scope>PHOSPHORYLATION [LARGE SCALE ANALYSIS] AT SER-119; SER-268 AND SER-269</scope>
    <scope>IDENTIFICATION BY MASS SPECTROMETRY [LARGE SCALE ANALYSIS]</scope>
    <source>
        <strain>ADR376</strain>
    </source>
</reference>
<reference key="6">
    <citation type="journal article" date="2008" name="Mol. Cell. Proteomics">
        <title>A multidimensional chromatography technology for in-depth phosphoproteome analysis.</title>
        <authorList>
            <person name="Albuquerque C.P."/>
            <person name="Smolka M.B."/>
            <person name="Payne S.H."/>
            <person name="Bafna V."/>
            <person name="Eng J."/>
            <person name="Zhou H."/>
        </authorList>
    </citation>
    <scope>PHOSPHORYLATION [LARGE SCALE ANALYSIS] AT SER-119 AND SER-289</scope>
    <scope>IDENTIFICATION BY MASS SPECTROMETRY [LARGE SCALE ANALYSIS]</scope>
</reference>
<reference key="7">
    <citation type="journal article" date="2009" name="Science">
        <title>Global analysis of Cdk1 substrate phosphorylation sites provides insights into evolution.</title>
        <authorList>
            <person name="Holt L.J."/>
            <person name="Tuch B.B."/>
            <person name="Villen J."/>
            <person name="Johnson A.D."/>
            <person name="Gygi S.P."/>
            <person name="Morgan D.O."/>
        </authorList>
    </citation>
    <scope>PHOSPHORYLATION [LARGE SCALE ANALYSIS] AT SER-119; SER-268; SER-269 AND SER-289</scope>
    <scope>IDENTIFICATION BY MASS SPECTROMETRY [LARGE SCALE ANALYSIS]</scope>
</reference>